<dbReference type="EC" id="4.1.99.12" evidence="1"/>
<dbReference type="EMBL" id="BA000032">
    <property type="protein sequence ID" value="BAC62593.1"/>
    <property type="molecule type" value="Genomic_DNA"/>
</dbReference>
<dbReference type="RefSeq" id="NP_800760.1">
    <property type="nucleotide sequence ID" value="NC_004605.1"/>
</dbReference>
<dbReference type="RefSeq" id="WP_005477276.1">
    <property type="nucleotide sequence ID" value="NC_004605.1"/>
</dbReference>
<dbReference type="SMR" id="Q87GR5"/>
<dbReference type="GeneID" id="1191946"/>
<dbReference type="KEGG" id="vpa:VPA1250"/>
<dbReference type="PATRIC" id="fig|223926.6.peg.4175"/>
<dbReference type="eggNOG" id="COG0108">
    <property type="taxonomic scope" value="Bacteria"/>
</dbReference>
<dbReference type="HOGENOM" id="CLU_020273_3_0_6"/>
<dbReference type="UniPathway" id="UPA00275">
    <property type="reaction ID" value="UER00399"/>
</dbReference>
<dbReference type="Proteomes" id="UP000002493">
    <property type="component" value="Chromosome 2"/>
</dbReference>
<dbReference type="GO" id="GO:0005829">
    <property type="term" value="C:cytosol"/>
    <property type="evidence" value="ECO:0007669"/>
    <property type="project" value="TreeGrafter"/>
</dbReference>
<dbReference type="GO" id="GO:0008686">
    <property type="term" value="F:3,4-dihydroxy-2-butanone-4-phosphate synthase activity"/>
    <property type="evidence" value="ECO:0007669"/>
    <property type="project" value="UniProtKB-UniRule"/>
</dbReference>
<dbReference type="GO" id="GO:0000287">
    <property type="term" value="F:magnesium ion binding"/>
    <property type="evidence" value="ECO:0007669"/>
    <property type="project" value="UniProtKB-UniRule"/>
</dbReference>
<dbReference type="GO" id="GO:0030145">
    <property type="term" value="F:manganese ion binding"/>
    <property type="evidence" value="ECO:0007669"/>
    <property type="project" value="UniProtKB-UniRule"/>
</dbReference>
<dbReference type="GO" id="GO:0009231">
    <property type="term" value="P:riboflavin biosynthetic process"/>
    <property type="evidence" value="ECO:0007669"/>
    <property type="project" value="UniProtKB-UniRule"/>
</dbReference>
<dbReference type="FunFam" id="3.90.870.10:FF:000002">
    <property type="entry name" value="3,4-dihydroxy-2-butanone 4-phosphate synthase"/>
    <property type="match status" value="1"/>
</dbReference>
<dbReference type="Gene3D" id="3.90.870.10">
    <property type="entry name" value="DHBP synthase"/>
    <property type="match status" value="1"/>
</dbReference>
<dbReference type="HAMAP" id="MF_00180">
    <property type="entry name" value="RibB"/>
    <property type="match status" value="1"/>
</dbReference>
<dbReference type="InterPro" id="IPR017945">
    <property type="entry name" value="DHBP_synth_RibB-like_a/b_dom"/>
</dbReference>
<dbReference type="InterPro" id="IPR000422">
    <property type="entry name" value="DHBP_synthase_RibB"/>
</dbReference>
<dbReference type="NCBIfam" id="TIGR00506">
    <property type="entry name" value="ribB"/>
    <property type="match status" value="1"/>
</dbReference>
<dbReference type="PANTHER" id="PTHR21327:SF38">
    <property type="entry name" value="3,4-DIHYDROXY-2-BUTANONE 4-PHOSPHATE SYNTHASE"/>
    <property type="match status" value="1"/>
</dbReference>
<dbReference type="PANTHER" id="PTHR21327">
    <property type="entry name" value="GTP CYCLOHYDROLASE II-RELATED"/>
    <property type="match status" value="1"/>
</dbReference>
<dbReference type="Pfam" id="PF00926">
    <property type="entry name" value="DHBP_synthase"/>
    <property type="match status" value="1"/>
</dbReference>
<dbReference type="SUPFAM" id="SSF55821">
    <property type="entry name" value="YrdC/RibB"/>
    <property type="match status" value="1"/>
</dbReference>
<sequence>MNQSSLLAEFGDPITRVENALIALKEGRGVLLLDDEDRENEGDIIYSVEHLTNEQMALMIRECSGIVCLCLTDAQADKLELPPMVVNNNSANQTAFTVSIEAKVGVTTGVSAADRVTTIKTAANPHAKPEDLARPGHVFPLRARPGGVMTRRGHTEGTIDLMQMAGLQPAGVLCEVTNPDGTMAKAPEIVAFGHLHNMPVLTIEDMVAYRNQFDLKLA</sequence>
<comment type="function">
    <text evidence="1">Catalyzes the conversion of D-ribulose 5-phosphate to formate and 3,4-dihydroxy-2-butanone 4-phosphate.</text>
</comment>
<comment type="catalytic activity">
    <reaction evidence="1">
        <text>D-ribulose 5-phosphate = (2S)-2-hydroxy-3-oxobutyl phosphate + formate + H(+)</text>
        <dbReference type="Rhea" id="RHEA:18457"/>
        <dbReference type="ChEBI" id="CHEBI:15378"/>
        <dbReference type="ChEBI" id="CHEBI:15740"/>
        <dbReference type="ChEBI" id="CHEBI:58121"/>
        <dbReference type="ChEBI" id="CHEBI:58830"/>
        <dbReference type="EC" id="4.1.99.12"/>
    </reaction>
</comment>
<comment type="cofactor">
    <cofactor evidence="1">
        <name>Mg(2+)</name>
        <dbReference type="ChEBI" id="CHEBI:18420"/>
    </cofactor>
    <cofactor evidence="1">
        <name>Mn(2+)</name>
        <dbReference type="ChEBI" id="CHEBI:29035"/>
    </cofactor>
    <text evidence="1">Binds 2 divalent metal cations per subunit. Magnesium or manganese.</text>
</comment>
<comment type="pathway">
    <text evidence="1">Cofactor biosynthesis; riboflavin biosynthesis; 2-hydroxy-3-oxobutyl phosphate from D-ribulose 5-phosphate: step 1/1.</text>
</comment>
<comment type="subunit">
    <text evidence="1">Homodimer.</text>
</comment>
<comment type="similarity">
    <text evidence="1">Belongs to the DHBP synthase family.</text>
</comment>
<evidence type="ECO:0000255" key="1">
    <source>
        <dbReference type="HAMAP-Rule" id="MF_00180"/>
    </source>
</evidence>
<evidence type="ECO:0000256" key="2">
    <source>
        <dbReference type="SAM" id="MobiDB-lite"/>
    </source>
</evidence>
<proteinExistence type="inferred from homology"/>
<feature type="chain" id="PRO_0000151816" description="3,4-dihydroxy-2-butanone 4-phosphate synthase">
    <location>
        <begin position="1"/>
        <end position="218"/>
    </location>
</feature>
<feature type="region of interest" description="Disordered" evidence="2">
    <location>
        <begin position="125"/>
        <end position="151"/>
    </location>
</feature>
<feature type="binding site" evidence="1">
    <location>
        <begin position="38"/>
        <end position="39"/>
    </location>
    <ligand>
        <name>D-ribulose 5-phosphate</name>
        <dbReference type="ChEBI" id="CHEBI:58121"/>
    </ligand>
</feature>
<feature type="binding site" evidence="1">
    <location>
        <position position="39"/>
    </location>
    <ligand>
        <name>Mg(2+)</name>
        <dbReference type="ChEBI" id="CHEBI:18420"/>
        <label>1</label>
    </ligand>
</feature>
<feature type="binding site" evidence="1">
    <location>
        <position position="39"/>
    </location>
    <ligand>
        <name>Mg(2+)</name>
        <dbReference type="ChEBI" id="CHEBI:18420"/>
        <label>2</label>
    </ligand>
</feature>
<feature type="binding site" evidence="1">
    <location>
        <position position="43"/>
    </location>
    <ligand>
        <name>D-ribulose 5-phosphate</name>
        <dbReference type="ChEBI" id="CHEBI:58121"/>
    </ligand>
</feature>
<feature type="binding site" evidence="1">
    <location>
        <begin position="151"/>
        <end position="155"/>
    </location>
    <ligand>
        <name>D-ribulose 5-phosphate</name>
        <dbReference type="ChEBI" id="CHEBI:58121"/>
    </ligand>
</feature>
<feature type="binding site" evidence="1">
    <location>
        <position position="154"/>
    </location>
    <ligand>
        <name>Mg(2+)</name>
        <dbReference type="ChEBI" id="CHEBI:18420"/>
        <label>2</label>
    </ligand>
</feature>
<feature type="binding site" evidence="1">
    <location>
        <position position="175"/>
    </location>
    <ligand>
        <name>D-ribulose 5-phosphate</name>
        <dbReference type="ChEBI" id="CHEBI:58121"/>
    </ligand>
</feature>
<feature type="site" description="Essential for catalytic activity" evidence="1">
    <location>
        <position position="137"/>
    </location>
</feature>
<feature type="site" description="Essential for catalytic activity" evidence="1">
    <location>
        <position position="175"/>
    </location>
</feature>
<reference key="1">
    <citation type="journal article" date="2003" name="Lancet">
        <title>Genome sequence of Vibrio parahaemolyticus: a pathogenic mechanism distinct from that of V. cholerae.</title>
        <authorList>
            <person name="Makino K."/>
            <person name="Oshima K."/>
            <person name="Kurokawa K."/>
            <person name="Yokoyama K."/>
            <person name="Uda T."/>
            <person name="Tagomori K."/>
            <person name="Iijima Y."/>
            <person name="Najima M."/>
            <person name="Nakano M."/>
            <person name="Yamashita A."/>
            <person name="Kubota Y."/>
            <person name="Kimura S."/>
            <person name="Yasunaga T."/>
            <person name="Honda T."/>
            <person name="Shinagawa H."/>
            <person name="Hattori M."/>
            <person name="Iida T."/>
        </authorList>
    </citation>
    <scope>NUCLEOTIDE SEQUENCE [LARGE SCALE GENOMIC DNA]</scope>
    <source>
        <strain>RIMD 2210633</strain>
    </source>
</reference>
<organism>
    <name type="scientific">Vibrio parahaemolyticus serotype O3:K6 (strain RIMD 2210633)</name>
    <dbReference type="NCBI Taxonomy" id="223926"/>
    <lineage>
        <taxon>Bacteria</taxon>
        <taxon>Pseudomonadati</taxon>
        <taxon>Pseudomonadota</taxon>
        <taxon>Gammaproteobacteria</taxon>
        <taxon>Vibrionales</taxon>
        <taxon>Vibrionaceae</taxon>
        <taxon>Vibrio</taxon>
    </lineage>
</organism>
<accession>Q87GR5</accession>
<gene>
    <name evidence="1" type="primary">ribB</name>
    <name type="ordered locus">VPA1250</name>
</gene>
<protein>
    <recommendedName>
        <fullName evidence="1">3,4-dihydroxy-2-butanone 4-phosphate synthase</fullName>
        <shortName evidence="1">DHBP synthase</shortName>
        <ecNumber evidence="1">4.1.99.12</ecNumber>
    </recommendedName>
</protein>
<keyword id="KW-0456">Lyase</keyword>
<keyword id="KW-0460">Magnesium</keyword>
<keyword id="KW-0464">Manganese</keyword>
<keyword id="KW-0479">Metal-binding</keyword>
<keyword id="KW-0686">Riboflavin biosynthesis</keyword>
<name>RIBB_VIBPA</name>